<dbReference type="EMBL" id="L04538">
    <property type="protein sequence ID" value="AAA37247.1"/>
    <property type="molecule type" value="mRNA"/>
</dbReference>
<dbReference type="EMBL" id="AK154992">
    <property type="protein sequence ID" value="BAE32979.1"/>
    <property type="molecule type" value="mRNA"/>
</dbReference>
<dbReference type="EMBL" id="JH584274">
    <property type="status" value="NOT_ANNOTATED_CDS"/>
    <property type="molecule type" value="Genomic_DNA"/>
</dbReference>
<dbReference type="EMBL" id="BC021877">
    <property type="protein sequence ID" value="AAH21877.1"/>
    <property type="molecule type" value="mRNA"/>
</dbReference>
<dbReference type="CCDS" id="CCDS21092.1"/>
<dbReference type="PIR" id="A46362">
    <property type="entry name" value="A46362"/>
</dbReference>
<dbReference type="RefSeq" id="NP_031493.2">
    <property type="nucleotide sequence ID" value="NM_007467.4"/>
</dbReference>
<dbReference type="SMR" id="Q03157"/>
<dbReference type="BioGRID" id="198153">
    <property type="interactions" value="10"/>
</dbReference>
<dbReference type="FunCoup" id="Q03157">
    <property type="interactions" value="781"/>
</dbReference>
<dbReference type="IntAct" id="Q03157">
    <property type="interactions" value="9"/>
</dbReference>
<dbReference type="MINT" id="Q03157"/>
<dbReference type="STRING" id="10090.ENSMUSP00000006828"/>
<dbReference type="GlyCosmos" id="Q03157">
    <property type="glycosylation" value="2 sites, No reported glycans"/>
</dbReference>
<dbReference type="GlyGen" id="Q03157">
    <property type="glycosylation" value="8 sites, 2 N-linked glycans (2 sites), 1 O-linked glycan (1 site)"/>
</dbReference>
<dbReference type="iPTMnet" id="Q03157"/>
<dbReference type="PhosphoSitePlus" id="Q03157"/>
<dbReference type="SwissPalm" id="Q03157"/>
<dbReference type="CPTAC" id="non-CPTAC-3635"/>
<dbReference type="PaxDb" id="10090-ENSMUSP00000006828"/>
<dbReference type="PeptideAtlas" id="Q03157"/>
<dbReference type="ProteomicsDB" id="283160"/>
<dbReference type="ProteomicsDB" id="332404"/>
<dbReference type="Antibodypedia" id="16162">
    <property type="antibodies" value="257 antibodies from 28 providers"/>
</dbReference>
<dbReference type="DNASU" id="11803"/>
<dbReference type="Ensembl" id="ENSMUST00000006828.9">
    <property type="protein sequence ID" value="ENSMUSP00000006828.8"/>
    <property type="gene ID" value="ENSMUSG00000006651.9"/>
</dbReference>
<dbReference type="GeneID" id="11803"/>
<dbReference type="KEGG" id="mmu:11803"/>
<dbReference type="UCSC" id="uc009gek.2">
    <property type="organism name" value="mouse"/>
</dbReference>
<dbReference type="AGR" id="MGI:88046"/>
<dbReference type="CTD" id="333"/>
<dbReference type="MGI" id="MGI:88046">
    <property type="gene designation" value="Aplp1"/>
</dbReference>
<dbReference type="VEuPathDB" id="HostDB:ENSMUSG00000006651"/>
<dbReference type="eggNOG" id="KOG3540">
    <property type="taxonomic scope" value="Eukaryota"/>
</dbReference>
<dbReference type="GeneTree" id="ENSGT00530000063252"/>
<dbReference type="InParanoid" id="Q03157"/>
<dbReference type="OMA" id="CLRDPQH"/>
<dbReference type="OrthoDB" id="6147836at2759"/>
<dbReference type="PhylomeDB" id="Q03157"/>
<dbReference type="TreeFam" id="TF317274"/>
<dbReference type="BioGRID-ORCS" id="11803">
    <property type="hits" value="5 hits in 79 CRISPR screens"/>
</dbReference>
<dbReference type="ChiTaRS" id="Aplp1">
    <property type="organism name" value="mouse"/>
</dbReference>
<dbReference type="PRO" id="PR:Q03157"/>
<dbReference type="Proteomes" id="UP000000589">
    <property type="component" value="Chromosome 7"/>
</dbReference>
<dbReference type="RNAct" id="Q03157">
    <property type="molecule type" value="protein"/>
</dbReference>
<dbReference type="Bgee" id="ENSMUSG00000006651">
    <property type="expression patterns" value="Expressed in nucleus accumbens and 194 other cell types or tissues"/>
</dbReference>
<dbReference type="GO" id="GO:0005794">
    <property type="term" value="C:Golgi apparatus"/>
    <property type="evidence" value="ECO:0000314"/>
    <property type="project" value="UniProtKB"/>
</dbReference>
<dbReference type="GO" id="GO:0016020">
    <property type="term" value="C:membrane"/>
    <property type="evidence" value="ECO:0000314"/>
    <property type="project" value="MGI"/>
</dbReference>
<dbReference type="GO" id="GO:0005654">
    <property type="term" value="C:nucleoplasm"/>
    <property type="evidence" value="ECO:0007669"/>
    <property type="project" value="Ensembl"/>
</dbReference>
<dbReference type="GO" id="GO:0048471">
    <property type="term" value="C:perinuclear region of cytoplasm"/>
    <property type="evidence" value="ECO:0007669"/>
    <property type="project" value="Ensembl"/>
</dbReference>
<dbReference type="GO" id="GO:0005886">
    <property type="term" value="C:plasma membrane"/>
    <property type="evidence" value="ECO:0007669"/>
    <property type="project" value="UniProtKB-SubCell"/>
</dbReference>
<dbReference type="GO" id="GO:0031694">
    <property type="term" value="F:alpha-2A adrenergic receptor binding"/>
    <property type="evidence" value="ECO:0007669"/>
    <property type="project" value="Ensembl"/>
</dbReference>
<dbReference type="GO" id="GO:0031695">
    <property type="term" value="F:alpha-2B adrenergic receptor binding"/>
    <property type="evidence" value="ECO:0007669"/>
    <property type="project" value="Ensembl"/>
</dbReference>
<dbReference type="GO" id="GO:0031696">
    <property type="term" value="F:alpha-2C adrenergic receptor binding"/>
    <property type="evidence" value="ECO:0007669"/>
    <property type="project" value="Ensembl"/>
</dbReference>
<dbReference type="GO" id="GO:0008201">
    <property type="term" value="F:heparin binding"/>
    <property type="evidence" value="ECO:0007669"/>
    <property type="project" value="UniProtKB-KW"/>
</dbReference>
<dbReference type="GO" id="GO:0042802">
    <property type="term" value="F:identical protein binding"/>
    <property type="evidence" value="ECO:0007669"/>
    <property type="project" value="Ensembl"/>
</dbReference>
<dbReference type="GO" id="GO:0046914">
    <property type="term" value="F:transition metal ion binding"/>
    <property type="evidence" value="ECO:0007669"/>
    <property type="project" value="InterPro"/>
</dbReference>
<dbReference type="GO" id="GO:0006915">
    <property type="term" value="P:apoptotic process"/>
    <property type="evidence" value="ECO:0007669"/>
    <property type="project" value="UniProtKB-KW"/>
</dbReference>
<dbReference type="GO" id="GO:0007155">
    <property type="term" value="P:cell adhesion"/>
    <property type="evidence" value="ECO:0007669"/>
    <property type="project" value="UniProtKB-KW"/>
</dbReference>
<dbReference type="GO" id="GO:0071874">
    <property type="term" value="P:cellular response to norepinephrine stimulus"/>
    <property type="evidence" value="ECO:0007669"/>
    <property type="project" value="Ensembl"/>
</dbReference>
<dbReference type="GO" id="GO:0180011">
    <property type="term" value="P:cytosolic mRNA polyadenylation"/>
    <property type="evidence" value="ECO:0000314"/>
    <property type="project" value="MGI"/>
</dbReference>
<dbReference type="GO" id="GO:0006897">
    <property type="term" value="P:endocytosis"/>
    <property type="evidence" value="ECO:0007669"/>
    <property type="project" value="UniProtKB-KW"/>
</dbReference>
<dbReference type="GO" id="GO:0030198">
    <property type="term" value="P:extracellular matrix organization"/>
    <property type="evidence" value="ECO:0000316"/>
    <property type="project" value="MGI"/>
</dbReference>
<dbReference type="GO" id="GO:0030900">
    <property type="term" value="P:forebrain development"/>
    <property type="evidence" value="ECO:0000316"/>
    <property type="project" value="MGI"/>
</dbReference>
<dbReference type="GO" id="GO:0106072">
    <property type="term" value="P:negative regulation of adenylate cyclase-activating G protein-coupled receptor signaling pathway"/>
    <property type="evidence" value="ECO:0007669"/>
    <property type="project" value="Ensembl"/>
</dbReference>
<dbReference type="GO" id="GO:0006417">
    <property type="term" value="P:regulation of translation"/>
    <property type="evidence" value="ECO:0000314"/>
    <property type="project" value="MGI"/>
</dbReference>
<dbReference type="FunFam" id="1.20.120.770:FF:000001">
    <property type="entry name" value="Amyloid beta A4 protein-like isoform 1"/>
    <property type="match status" value="1"/>
</dbReference>
<dbReference type="FunFam" id="3.90.570.10:FF:000003">
    <property type="entry name" value="Amyloid beta precursor like protein 1"/>
    <property type="match status" value="1"/>
</dbReference>
<dbReference type="Gene3D" id="1.20.120.770">
    <property type="entry name" value="Amyloid precursor protein, E2 domain"/>
    <property type="match status" value="1"/>
</dbReference>
<dbReference type="Gene3D" id="3.30.1490.140">
    <property type="entry name" value="Amyloidogenic glycoprotein, copper-binding domain"/>
    <property type="match status" value="1"/>
</dbReference>
<dbReference type="Gene3D" id="3.90.570.10">
    <property type="entry name" value="Amyloidogenic glycoprotein, heparin-binding domain"/>
    <property type="match status" value="1"/>
</dbReference>
<dbReference type="InterPro" id="IPR036669">
    <property type="entry name" value="Amyloid_Cu-bd_sf"/>
</dbReference>
<dbReference type="InterPro" id="IPR008155">
    <property type="entry name" value="Amyloid_glyco"/>
</dbReference>
<dbReference type="InterPro" id="IPR011178">
    <property type="entry name" value="Amyloid_glyco_Cu-bd"/>
</dbReference>
<dbReference type="InterPro" id="IPR024329">
    <property type="entry name" value="Amyloid_glyco_E2_domain"/>
</dbReference>
<dbReference type="InterPro" id="IPR008154">
    <property type="entry name" value="Amyloid_glyco_extra"/>
</dbReference>
<dbReference type="InterPro" id="IPR015849">
    <property type="entry name" value="Amyloid_glyco_heparin-bd"/>
</dbReference>
<dbReference type="InterPro" id="IPR036454">
    <property type="entry name" value="Amyloid_glyco_heparin-bd_sf"/>
</dbReference>
<dbReference type="InterPro" id="IPR019745">
    <property type="entry name" value="Amyloid_glyco_intracell_CS"/>
</dbReference>
<dbReference type="InterPro" id="IPR019543">
    <property type="entry name" value="APP_amyloid_C"/>
</dbReference>
<dbReference type="InterPro" id="IPR019744">
    <property type="entry name" value="APP_CUBD_CS"/>
</dbReference>
<dbReference type="InterPro" id="IPR036176">
    <property type="entry name" value="E2_sf"/>
</dbReference>
<dbReference type="PANTHER" id="PTHR23103">
    <property type="entry name" value="ALZHEIMER'S DISEASE BETA-AMYLOID RELATED"/>
    <property type="match status" value="1"/>
</dbReference>
<dbReference type="PANTHER" id="PTHR23103:SF13">
    <property type="entry name" value="AMYLOID BETA PRECURSOR LIKE PROTEIN 1"/>
    <property type="match status" value="1"/>
</dbReference>
<dbReference type="Pfam" id="PF10515">
    <property type="entry name" value="APP_amyloid"/>
    <property type="match status" value="1"/>
</dbReference>
<dbReference type="Pfam" id="PF12924">
    <property type="entry name" value="APP_Cu_bd"/>
    <property type="match status" value="1"/>
</dbReference>
<dbReference type="Pfam" id="PF12925">
    <property type="entry name" value="APP_E2"/>
    <property type="match status" value="1"/>
</dbReference>
<dbReference type="Pfam" id="PF02177">
    <property type="entry name" value="APP_N"/>
    <property type="match status" value="1"/>
</dbReference>
<dbReference type="PRINTS" id="PR00203">
    <property type="entry name" value="AMYLOIDA4"/>
</dbReference>
<dbReference type="SMART" id="SM00006">
    <property type="entry name" value="A4_EXTRA"/>
    <property type="match status" value="1"/>
</dbReference>
<dbReference type="SUPFAM" id="SSF56491">
    <property type="entry name" value="A heparin-binding domain"/>
    <property type="match status" value="1"/>
</dbReference>
<dbReference type="SUPFAM" id="SSF89811">
    <property type="entry name" value="Amyloid beta a4 protein copper binding domain (domain 2)"/>
    <property type="match status" value="1"/>
</dbReference>
<dbReference type="SUPFAM" id="SSF109843">
    <property type="entry name" value="CAPPD, an extracellular domain of amyloid beta A4 protein"/>
    <property type="match status" value="1"/>
</dbReference>
<dbReference type="PROSITE" id="PS00319">
    <property type="entry name" value="APP_CUBD"/>
    <property type="match status" value="1"/>
</dbReference>
<dbReference type="PROSITE" id="PS51869">
    <property type="entry name" value="APP_E1"/>
    <property type="match status" value="1"/>
</dbReference>
<dbReference type="PROSITE" id="PS51870">
    <property type="entry name" value="APP_E2"/>
    <property type="match status" value="1"/>
</dbReference>
<dbReference type="PROSITE" id="PS00320">
    <property type="entry name" value="APP_INTRA"/>
    <property type="match status" value="1"/>
</dbReference>
<accession>Q03157</accession>
<accession>A0A0R4IZZ1</accession>
<accession>Q3U311</accession>
<accession>Q8VC38</accession>
<proteinExistence type="evidence at protein level"/>
<name>APLP1_MOUSE</name>
<protein>
    <recommendedName>
        <fullName evidence="3">Amyloid beta precursor like protein 1</fullName>
    </recommendedName>
    <alternativeName>
        <fullName evidence="15">Amyloid beta (A4) precursor-like protein 1</fullName>
    </alternativeName>
    <alternativeName>
        <fullName evidence="3">Amyloid-like protein 1</fullName>
        <shortName evidence="3">APLP</shortName>
        <shortName>APLP-1</shortName>
    </alternativeName>
    <component>
        <recommendedName>
            <fullName>C30</fullName>
        </recommendedName>
    </component>
</protein>
<organism>
    <name type="scientific">Mus musculus</name>
    <name type="common">Mouse</name>
    <dbReference type="NCBI Taxonomy" id="10090"/>
    <lineage>
        <taxon>Eukaryota</taxon>
        <taxon>Metazoa</taxon>
        <taxon>Chordata</taxon>
        <taxon>Craniata</taxon>
        <taxon>Vertebrata</taxon>
        <taxon>Euteleostomi</taxon>
        <taxon>Mammalia</taxon>
        <taxon>Eutheria</taxon>
        <taxon>Euarchontoglires</taxon>
        <taxon>Glires</taxon>
        <taxon>Rodentia</taxon>
        <taxon>Myomorpha</taxon>
        <taxon>Muroidea</taxon>
        <taxon>Muridae</taxon>
        <taxon>Murinae</taxon>
        <taxon>Mus</taxon>
        <taxon>Mus</taxon>
    </lineage>
</organism>
<reference key="1">
    <citation type="journal article" date="1992" name="Proc. Natl. Acad. Sci. U.S.A.">
        <title>Identification of a mouse brain cDNA that encodes a protein related to the Alzheimer disease-associated amyloid beta protein precursor.</title>
        <authorList>
            <person name="Wasco W."/>
            <person name="Bupp K."/>
            <person name="Magendantz M."/>
            <person name="Gusella J.F."/>
            <person name="Tanzi R.E."/>
            <person name="Solomon F."/>
        </authorList>
    </citation>
    <scope>NUCLEOTIDE SEQUENCE [MRNA]</scope>
    <source>
        <tissue>Brain</tissue>
    </source>
</reference>
<reference key="2">
    <citation type="journal article" date="2005" name="Science">
        <title>The transcriptional landscape of the mammalian genome.</title>
        <authorList>
            <person name="Carninci P."/>
            <person name="Kasukawa T."/>
            <person name="Katayama S."/>
            <person name="Gough J."/>
            <person name="Frith M.C."/>
            <person name="Maeda N."/>
            <person name="Oyama R."/>
            <person name="Ravasi T."/>
            <person name="Lenhard B."/>
            <person name="Wells C."/>
            <person name="Kodzius R."/>
            <person name="Shimokawa K."/>
            <person name="Bajic V.B."/>
            <person name="Brenner S.E."/>
            <person name="Batalov S."/>
            <person name="Forrest A.R."/>
            <person name="Zavolan M."/>
            <person name="Davis M.J."/>
            <person name="Wilming L.G."/>
            <person name="Aidinis V."/>
            <person name="Allen J.E."/>
            <person name="Ambesi-Impiombato A."/>
            <person name="Apweiler R."/>
            <person name="Aturaliya R.N."/>
            <person name="Bailey T.L."/>
            <person name="Bansal M."/>
            <person name="Baxter L."/>
            <person name="Beisel K.W."/>
            <person name="Bersano T."/>
            <person name="Bono H."/>
            <person name="Chalk A.M."/>
            <person name="Chiu K.P."/>
            <person name="Choudhary V."/>
            <person name="Christoffels A."/>
            <person name="Clutterbuck D.R."/>
            <person name="Crowe M.L."/>
            <person name="Dalla E."/>
            <person name="Dalrymple B.P."/>
            <person name="de Bono B."/>
            <person name="Della Gatta G."/>
            <person name="di Bernardo D."/>
            <person name="Down T."/>
            <person name="Engstrom P."/>
            <person name="Fagiolini M."/>
            <person name="Faulkner G."/>
            <person name="Fletcher C.F."/>
            <person name="Fukushima T."/>
            <person name="Furuno M."/>
            <person name="Futaki S."/>
            <person name="Gariboldi M."/>
            <person name="Georgii-Hemming P."/>
            <person name="Gingeras T.R."/>
            <person name="Gojobori T."/>
            <person name="Green R.E."/>
            <person name="Gustincich S."/>
            <person name="Harbers M."/>
            <person name="Hayashi Y."/>
            <person name="Hensch T.K."/>
            <person name="Hirokawa N."/>
            <person name="Hill D."/>
            <person name="Huminiecki L."/>
            <person name="Iacono M."/>
            <person name="Ikeo K."/>
            <person name="Iwama A."/>
            <person name="Ishikawa T."/>
            <person name="Jakt M."/>
            <person name="Kanapin A."/>
            <person name="Katoh M."/>
            <person name="Kawasawa Y."/>
            <person name="Kelso J."/>
            <person name="Kitamura H."/>
            <person name="Kitano H."/>
            <person name="Kollias G."/>
            <person name="Krishnan S.P."/>
            <person name="Kruger A."/>
            <person name="Kummerfeld S.K."/>
            <person name="Kurochkin I.V."/>
            <person name="Lareau L.F."/>
            <person name="Lazarevic D."/>
            <person name="Lipovich L."/>
            <person name="Liu J."/>
            <person name="Liuni S."/>
            <person name="McWilliam S."/>
            <person name="Madan Babu M."/>
            <person name="Madera M."/>
            <person name="Marchionni L."/>
            <person name="Matsuda H."/>
            <person name="Matsuzawa S."/>
            <person name="Miki H."/>
            <person name="Mignone F."/>
            <person name="Miyake S."/>
            <person name="Morris K."/>
            <person name="Mottagui-Tabar S."/>
            <person name="Mulder N."/>
            <person name="Nakano N."/>
            <person name="Nakauchi H."/>
            <person name="Ng P."/>
            <person name="Nilsson R."/>
            <person name="Nishiguchi S."/>
            <person name="Nishikawa S."/>
            <person name="Nori F."/>
            <person name="Ohara O."/>
            <person name="Okazaki Y."/>
            <person name="Orlando V."/>
            <person name="Pang K.C."/>
            <person name="Pavan W.J."/>
            <person name="Pavesi G."/>
            <person name="Pesole G."/>
            <person name="Petrovsky N."/>
            <person name="Piazza S."/>
            <person name="Reed J."/>
            <person name="Reid J.F."/>
            <person name="Ring B.Z."/>
            <person name="Ringwald M."/>
            <person name="Rost B."/>
            <person name="Ruan Y."/>
            <person name="Salzberg S.L."/>
            <person name="Sandelin A."/>
            <person name="Schneider C."/>
            <person name="Schoenbach C."/>
            <person name="Sekiguchi K."/>
            <person name="Semple C.A."/>
            <person name="Seno S."/>
            <person name="Sessa L."/>
            <person name="Sheng Y."/>
            <person name="Shibata Y."/>
            <person name="Shimada H."/>
            <person name="Shimada K."/>
            <person name="Silva D."/>
            <person name="Sinclair B."/>
            <person name="Sperling S."/>
            <person name="Stupka E."/>
            <person name="Sugiura K."/>
            <person name="Sultana R."/>
            <person name="Takenaka Y."/>
            <person name="Taki K."/>
            <person name="Tammoja K."/>
            <person name="Tan S.L."/>
            <person name="Tang S."/>
            <person name="Taylor M.S."/>
            <person name="Tegner J."/>
            <person name="Teichmann S.A."/>
            <person name="Ueda H.R."/>
            <person name="van Nimwegen E."/>
            <person name="Verardo R."/>
            <person name="Wei C.L."/>
            <person name="Yagi K."/>
            <person name="Yamanishi H."/>
            <person name="Zabarovsky E."/>
            <person name="Zhu S."/>
            <person name="Zimmer A."/>
            <person name="Hide W."/>
            <person name="Bult C."/>
            <person name="Grimmond S.M."/>
            <person name="Teasdale R.D."/>
            <person name="Liu E.T."/>
            <person name="Brusic V."/>
            <person name="Quackenbush J."/>
            <person name="Wahlestedt C."/>
            <person name="Mattick J.S."/>
            <person name="Hume D.A."/>
            <person name="Kai C."/>
            <person name="Sasaki D."/>
            <person name="Tomaru Y."/>
            <person name="Fukuda S."/>
            <person name="Kanamori-Katayama M."/>
            <person name="Suzuki M."/>
            <person name="Aoki J."/>
            <person name="Arakawa T."/>
            <person name="Iida J."/>
            <person name="Imamura K."/>
            <person name="Itoh M."/>
            <person name="Kato T."/>
            <person name="Kawaji H."/>
            <person name="Kawagashira N."/>
            <person name="Kawashima T."/>
            <person name="Kojima M."/>
            <person name="Kondo S."/>
            <person name="Konno H."/>
            <person name="Nakano K."/>
            <person name="Ninomiya N."/>
            <person name="Nishio T."/>
            <person name="Okada M."/>
            <person name="Plessy C."/>
            <person name="Shibata K."/>
            <person name="Shiraki T."/>
            <person name="Suzuki S."/>
            <person name="Tagami M."/>
            <person name="Waki K."/>
            <person name="Watahiki A."/>
            <person name="Okamura-Oho Y."/>
            <person name="Suzuki H."/>
            <person name="Kawai J."/>
            <person name="Hayashizaki Y."/>
        </authorList>
    </citation>
    <scope>NUCLEOTIDE SEQUENCE [LARGE SCALE MRNA]</scope>
    <source>
        <strain>NOD</strain>
    </source>
</reference>
<reference key="3">
    <citation type="journal article" date="2009" name="PLoS Biol.">
        <title>Lineage-specific biology revealed by a finished genome assembly of the mouse.</title>
        <authorList>
            <person name="Church D.M."/>
            <person name="Goodstadt L."/>
            <person name="Hillier L.W."/>
            <person name="Zody M.C."/>
            <person name="Goldstein S."/>
            <person name="She X."/>
            <person name="Bult C.J."/>
            <person name="Agarwala R."/>
            <person name="Cherry J.L."/>
            <person name="DiCuccio M."/>
            <person name="Hlavina W."/>
            <person name="Kapustin Y."/>
            <person name="Meric P."/>
            <person name="Maglott D."/>
            <person name="Birtle Z."/>
            <person name="Marques A.C."/>
            <person name="Graves T."/>
            <person name="Zhou S."/>
            <person name="Teague B."/>
            <person name="Potamousis K."/>
            <person name="Churas C."/>
            <person name="Place M."/>
            <person name="Herschleb J."/>
            <person name="Runnheim R."/>
            <person name="Forrest D."/>
            <person name="Amos-Landgraf J."/>
            <person name="Schwartz D.C."/>
            <person name="Cheng Z."/>
            <person name="Lindblad-Toh K."/>
            <person name="Eichler E.E."/>
            <person name="Ponting C.P."/>
        </authorList>
    </citation>
    <scope>NUCLEOTIDE SEQUENCE [LARGE SCALE GENOMIC DNA]</scope>
    <source>
        <strain>C57BL/6J</strain>
    </source>
</reference>
<reference key="4">
    <citation type="journal article" date="2004" name="Genome Res.">
        <title>The status, quality, and expansion of the NIH full-length cDNA project: the Mammalian Gene Collection (MGC).</title>
        <authorList>
            <consortium name="The MGC Project Team"/>
        </authorList>
    </citation>
    <scope>NUCLEOTIDE SEQUENCE [LARGE SCALE MRNA]</scope>
    <source>
        <tissue>Retina</tissue>
    </source>
</reference>
<reference key="5">
    <citation type="journal article" date="1996" name="J. Biol. Chem.">
        <title>Regulation of amyloid protein precursor (APP) binding to collagen and mapping of the binding sites on APP and collagen type I.</title>
        <authorList>
            <person name="Beher D."/>
            <person name="Hesse L."/>
            <person name="Masters C.L."/>
            <person name="Multhaup G."/>
        </authorList>
    </citation>
    <scope>COLLAGEN-BINDING</scope>
</reference>
<reference key="6">
    <citation type="journal article" date="1999" name="J. Neurosci.">
        <title>Disabled-1 binds to the cytoplasmic domain of amyloid precursor-like protein 1.</title>
        <authorList>
            <person name="Homayouni R."/>
            <person name="Rice D.S."/>
            <person name="Sheldon M."/>
            <person name="Curran T."/>
        </authorList>
    </citation>
    <scope>INTERACTION WITH DAB1</scope>
</reference>
<reference key="7">
    <citation type="journal article" date="2001" name="J. Neurosci.">
        <title>C-jun N-terminal kinase (JNK)-interacting protein-1b/islet-brain-1 scaffolds Alzheimer's amyloid precursor protein with JNK.</title>
        <authorList>
            <person name="Matsuda S."/>
            <person name="Yasukawa T."/>
            <person name="Homma Y."/>
            <person name="Ito Y."/>
            <person name="Niikura T."/>
            <person name="Hiraki T."/>
            <person name="Hirai S."/>
            <person name="Ohno S."/>
            <person name="Kita Y."/>
            <person name="Kawasumi M."/>
            <person name="Kouyama K."/>
            <person name="Yamamoto T."/>
            <person name="Kyriakis J.M."/>
            <person name="Nishimoto I."/>
        </authorList>
    </citation>
    <scope>INTERACTION WITH MAPK8IP1</scope>
</reference>
<reference key="8">
    <citation type="journal article" date="2001" name="Traffic">
        <title>Disabled-2 colocalizes with the LDLR in clathrin-coated pits and interacts with AP-2.</title>
        <authorList>
            <person name="Morris S.M."/>
            <person name="Cooper J.A."/>
        </authorList>
    </citation>
    <scope>INTERACTION WITH DAB2</scope>
</reference>
<reference key="9">
    <citation type="journal article" date="2002" name="J. Biol. Chem.">
        <title>Processing of beta-amyloid precursor-like protein-1 and -2 by gamma-secretase regulates transcription.</title>
        <authorList>
            <person name="Scheinfeld M.H."/>
            <person name="Ghersi E."/>
            <person name="Laky K."/>
            <person name="Fowlkes B.J."/>
            <person name="D'Adamio L."/>
        </authorList>
    </citation>
    <scope>PROTEOLYTIC PROCESSING BY GAMMA SECRETASE</scope>
    <scope>INTERACTION WITH APBB1</scope>
    <scope>MUTAGENESIS OF TYR-642</scope>
</reference>
<reference key="10">
    <citation type="journal article" date="2003" name="J. Biol. Chem.">
        <title>Crystal structures of the Dab homology domains of mouse disabled 1 and 2.</title>
        <authorList>
            <person name="Yun M."/>
            <person name="Keshvara L."/>
            <person name="Park C.G."/>
            <person name="Zhang Y.M."/>
            <person name="Dickerson J.B."/>
            <person name="Zheng J."/>
            <person name="Rock C.O."/>
            <person name="Curran T."/>
            <person name="Park H.W."/>
        </authorList>
    </citation>
    <scope>INTERACTION WITH DAB1</scope>
</reference>
<reference key="11">
    <citation type="journal article" date="2005" name="Mol. Cell. Biol.">
        <title>Amyloid precursor proteins anchor CPEB to membranes and promote polyadenylation-induced translation.</title>
        <authorList>
            <person name="Cao Q."/>
            <person name="Huang Y.-S."/>
            <person name="Kan M.-C."/>
            <person name="Richter J.D."/>
        </authorList>
    </citation>
    <scope>INTERACTION WITH CPEB1</scope>
</reference>
<reference key="12">
    <citation type="journal article" date="2010" name="Cell">
        <title>A tissue-specific atlas of mouse protein phosphorylation and expression.</title>
        <authorList>
            <person name="Huttlin E.L."/>
            <person name="Jedrychowski M.P."/>
            <person name="Elias J.E."/>
            <person name="Goswami T."/>
            <person name="Rad R."/>
            <person name="Beausoleil S.A."/>
            <person name="Villen J."/>
            <person name="Haas W."/>
            <person name="Sowa M.E."/>
            <person name="Gygi S.P."/>
        </authorList>
    </citation>
    <scope>IDENTIFICATION BY MASS SPECTROMETRY [LARGE SCALE ANALYSIS]</scope>
    <source>
        <tissue>Brain</tissue>
    </source>
</reference>
<gene>
    <name type="primary">Aplp1</name>
</gene>
<evidence type="ECO:0000250" key="1"/>
<evidence type="ECO:0000250" key="2">
    <source>
        <dbReference type="UniProtKB" id="P05067"/>
    </source>
</evidence>
<evidence type="ECO:0000250" key="3">
    <source>
        <dbReference type="UniProtKB" id="P51693"/>
    </source>
</evidence>
<evidence type="ECO:0000255" key="4"/>
<evidence type="ECO:0000255" key="5">
    <source>
        <dbReference type="PROSITE-ProRule" id="PRU01217"/>
    </source>
</evidence>
<evidence type="ECO:0000255" key="6">
    <source>
        <dbReference type="PROSITE-ProRule" id="PRU01218"/>
    </source>
</evidence>
<evidence type="ECO:0000256" key="7">
    <source>
        <dbReference type="SAM" id="MobiDB-lite"/>
    </source>
</evidence>
<evidence type="ECO:0000269" key="8">
    <source>
    </source>
</evidence>
<evidence type="ECO:0000269" key="9">
    <source>
    </source>
</evidence>
<evidence type="ECO:0000269" key="10">
    <source>
    </source>
</evidence>
<evidence type="ECO:0000269" key="11">
    <source>
    </source>
</evidence>
<evidence type="ECO:0000269" key="12">
    <source>
    </source>
</evidence>
<evidence type="ECO:0000269" key="13">
    <source>
    </source>
</evidence>
<evidence type="ECO:0000305" key="14"/>
<evidence type="ECO:0000312" key="15">
    <source>
        <dbReference type="MGI" id="MGI:88046"/>
    </source>
</evidence>
<sequence>MGPTSPAARGQGRRWRPPPLPLLLPLSLLLLRAQLAVGNLAVGSPSAAEAPGSAQVAGLCGRLTLHRDLRTGRWEPDPQRSRRCLLDPQRVLEYCRQMYPELHIARVEQAAQAIPMERWCGGTRSGRCAHPHHEVVPFHCLPGEFVSEALLVPEGCRFLHQERMDQCESSTRRHQEAQEACSSQGLILHGSGMLLPCGSDRFRGVEYVCCPPPATPNPSGMAAGDPSTRSWPLGGRAEGGEDEEEVESFPQPVDDYFVEPPQAEEEEEEEEERAPPPSSHTPVMVSRVTPTPRPTDGVDVYFGMPGEIGEHEGFLRAKMDLEERRMRQINEVMREWAMADSQSKNLPKADRQALNEHFQSILQTLEEQVSGERQRLVETHATRVIALINDQRRAALEGFLAALQGDPPQAERVLMALRRYLRAEQKEQRHTLRHYQHVAAVDPEKAQQMRFQVQTHLQVIEERMNQSLGLLDQNPHLAQELRPQIQELLLAEHLGPSELDASVPGSSSEDKGSLQPPESKDDPPVTLPKGSTDQESSSSGREKLTPLEQYEQKVNASAPRGFPFHSSDIQRDELAPSGTGVSREALSGLLIMGAGGGSLIVLSLLLLRKKKPYGTISHGVVEVDPMLTLEEQQLRELQRHGYENPTYRFLEERP</sequence>
<feature type="signal peptide" evidence="4">
    <location>
        <begin position="1"/>
        <end position="38"/>
    </location>
</feature>
<feature type="chain" id="PRO_0000000205" description="Amyloid beta precursor like protein 1">
    <location>
        <begin position="39"/>
        <end position="654"/>
    </location>
</feature>
<feature type="peptide" id="PRO_0000000206" description="C30" evidence="1">
    <location>
        <begin position="625"/>
        <end position="654"/>
    </location>
</feature>
<feature type="topological domain" description="Extracellular" evidence="4">
    <location>
        <begin position="39"/>
        <end position="584"/>
    </location>
</feature>
<feature type="transmembrane region" description="Helical" evidence="4">
    <location>
        <begin position="585"/>
        <end position="607"/>
    </location>
</feature>
<feature type="topological domain" description="Cytoplasmic" evidence="4">
    <location>
        <begin position="608"/>
        <end position="654"/>
    </location>
</feature>
<feature type="domain" description="E1" evidence="5">
    <location>
        <begin position="50"/>
        <end position="212"/>
    </location>
</feature>
<feature type="domain" description="E2" evidence="6">
    <location>
        <begin position="297"/>
        <end position="488"/>
    </location>
</feature>
<feature type="region of interest" description="GFLD subdomain" evidence="5">
    <location>
        <begin position="50"/>
        <end position="146"/>
    </location>
</feature>
<feature type="region of interest" description="CuBD subdomain" evidence="5">
    <location>
        <begin position="154"/>
        <end position="212"/>
    </location>
</feature>
<feature type="region of interest" description="Disordered" evidence="7">
    <location>
        <begin position="214"/>
        <end position="297"/>
    </location>
</feature>
<feature type="region of interest" description="Heparin-binding" evidence="1">
    <location>
        <begin position="314"/>
        <end position="346"/>
    </location>
</feature>
<feature type="region of interest" description="Heparin-binding" evidence="1">
    <location>
        <begin position="414"/>
        <end position="445"/>
    </location>
</feature>
<feature type="region of interest" description="Collagen-binding" evidence="1">
    <location>
        <begin position="446"/>
        <end position="463"/>
    </location>
</feature>
<feature type="region of interest" description="Disordered" evidence="7">
    <location>
        <begin position="497"/>
        <end position="580"/>
    </location>
</feature>
<feature type="region of interest" description="Interaction with DAB1">
    <location>
        <begin position="636"/>
        <end position="652"/>
    </location>
</feature>
<feature type="region of interest" description="Interaction with DAB2" evidence="9">
    <location>
        <begin position="640"/>
        <end position="654"/>
    </location>
</feature>
<feature type="short sequence motif" description="Basolateral sorting signal" evidence="1">
    <location>
        <begin position="608"/>
        <end position="619"/>
    </location>
</feature>
<feature type="short sequence motif" description="NPXY motif; contains endocytosis signal">
    <location>
        <begin position="644"/>
        <end position="647"/>
    </location>
</feature>
<feature type="compositionally biased region" description="Acidic residues" evidence="7">
    <location>
        <begin position="262"/>
        <end position="272"/>
    </location>
</feature>
<feature type="compositionally biased region" description="Basic and acidic residues" evidence="7">
    <location>
        <begin position="508"/>
        <end position="523"/>
    </location>
</feature>
<feature type="compositionally biased region" description="Polar residues" evidence="7">
    <location>
        <begin position="529"/>
        <end position="539"/>
    </location>
</feature>
<feature type="binding site" evidence="2">
    <location>
        <position position="174"/>
    </location>
    <ligand>
        <name>Cu(2+)</name>
        <dbReference type="ChEBI" id="CHEBI:29036"/>
        <label>1</label>
    </ligand>
</feature>
<feature type="binding site" evidence="2">
    <location>
        <position position="206"/>
    </location>
    <ligand>
        <name>Zn(2+)</name>
        <dbReference type="ChEBI" id="CHEBI:29105"/>
        <label>1</label>
    </ligand>
</feature>
<feature type="binding site" evidence="2">
    <location>
        <position position="209"/>
    </location>
    <ligand>
        <name>Zn(2+)</name>
        <dbReference type="ChEBI" id="CHEBI:29105"/>
        <label>1</label>
    </ligand>
</feature>
<feature type="binding site" evidence="2">
    <location>
        <position position="210"/>
    </location>
    <ligand>
        <name>Zn(2+)</name>
        <dbReference type="ChEBI" id="CHEBI:29105"/>
        <label>1</label>
    </ligand>
</feature>
<feature type="binding site" evidence="2">
    <location>
        <position position="565"/>
    </location>
    <ligand>
        <name>Cu(2+)</name>
        <dbReference type="ChEBI" id="CHEBI:29036"/>
        <label>2</label>
    </ligand>
</feature>
<feature type="binding site" evidence="2">
    <location>
        <position position="565"/>
    </location>
    <ligand>
        <name>Zn(2+)</name>
        <dbReference type="ChEBI" id="CHEBI:29105"/>
        <label>2</label>
    </ligand>
</feature>
<feature type="site" description="Cleavage; by caspase-3" evidence="1">
    <location>
        <begin position="624"/>
        <end position="625"/>
    </location>
</feature>
<feature type="glycosylation site" description="N-linked (GlcNAc...) asparagine" evidence="4">
    <location>
        <position position="465"/>
    </location>
</feature>
<feature type="glycosylation site" description="N-linked (GlcNAc...) asparagine" evidence="4">
    <location>
        <position position="555"/>
    </location>
</feature>
<feature type="disulfide bond" evidence="5">
    <location>
        <begin position="60"/>
        <end position="84"/>
    </location>
</feature>
<feature type="disulfide bond" evidence="5">
    <location>
        <begin position="95"/>
        <end position="140"/>
    </location>
</feature>
<feature type="disulfide bond" evidence="5">
    <location>
        <begin position="120"/>
        <end position="128"/>
    </location>
</feature>
<feature type="disulfide bond" evidence="5">
    <location>
        <begin position="156"/>
        <end position="210"/>
    </location>
</feature>
<feature type="disulfide bond" evidence="5">
    <location>
        <begin position="167"/>
        <end position="197"/>
    </location>
</feature>
<feature type="disulfide bond" evidence="5">
    <location>
        <begin position="181"/>
        <end position="209"/>
    </location>
</feature>
<feature type="mutagenesis site" description="Reduced binding of APBB1." evidence="11">
    <original>Y</original>
    <variation>G</variation>
    <location>
        <position position="642"/>
    </location>
</feature>
<feature type="sequence conflict" description="In Ref. 1; AAA37247." evidence="14" ref="1">
    <location>
        <position position="19"/>
    </location>
</feature>
<feature type="sequence conflict" description="In Ref. 2; BAE32979." evidence="14" ref="2">
    <original>H</original>
    <variation>P</variation>
    <location>
        <position position="280"/>
    </location>
</feature>
<keyword id="KW-0053">Apoptosis</keyword>
<keyword id="KW-0130">Cell adhesion</keyword>
<keyword id="KW-1003">Cell membrane</keyword>
<keyword id="KW-0186">Copper</keyword>
<keyword id="KW-0963">Cytoplasm</keyword>
<keyword id="KW-1015">Disulfide bond</keyword>
<keyword id="KW-0254">Endocytosis</keyword>
<keyword id="KW-0325">Glycoprotein</keyword>
<keyword id="KW-0358">Heparin-binding</keyword>
<keyword id="KW-0472">Membrane</keyword>
<keyword id="KW-0479">Metal-binding</keyword>
<keyword id="KW-0523">Neurodegeneration</keyword>
<keyword id="KW-1185">Reference proteome</keyword>
<keyword id="KW-0732">Signal</keyword>
<keyword id="KW-0812">Transmembrane</keyword>
<keyword id="KW-1133">Transmembrane helix</keyword>
<keyword id="KW-0862">Zinc</keyword>
<comment type="function">
    <text>May play a role in postsynaptic function. The C-terminal gamma-secretase processed fragment, ALID1, activates transcription activation through APBB1 (Fe65) binding. Couples to JIP signal transduction through C-terminal binding. May interact with cellular G-protein signaling pathways. Can regulate neurite outgrowth through binding to components of the extracellular matrix such as heparin and collagen I.</text>
</comment>
<comment type="function">
    <text evidence="1">The gamma-CTF peptide, C30, is a potent enhancer of neuronal apoptosis.</text>
</comment>
<comment type="subunit">
    <text evidence="1 8 9 10 11 12 13">Monomer and homodimer. Heparin binding promotes homodimerization. Binds, via its C-terminus, to the PID domain of several cytoplasmic proteins, including APBB and APBA family members, MAPK8IP1 and DAB1 (By similarity). Binding to Dab1 inhibits its serine phosphorylation. Interacts with CPEB1. Interacts (via NPXY motif) with DAB2 (via PID domain); the interaction is impaired by tyrosine phosphorylation of the NPXY motif. Interacts (via NPXY motif) with DAB1.</text>
</comment>
<comment type="interaction">
    <interactant intactId="EBI-399929">
        <id>Q03157</id>
    </interactant>
    <interactant intactId="EBI-78814">
        <id>P12023</id>
        <label>App</label>
    </interactant>
    <organismsDiffer>false</organismsDiffer>
    <experiments>4</experiments>
</comment>
<comment type="interaction">
    <interactant intactId="EBI-399929">
        <id>Q03157</id>
    </interactant>
    <interactant intactId="EBI-81680">
        <id>P97318</id>
        <label>Dab1</label>
    </interactant>
    <organismsDiffer>false</organismsDiffer>
    <experiments>4</experiments>
</comment>
<comment type="subcellular location">
    <subcellularLocation>
        <location>Cell membrane</location>
        <topology>Single-pass type I membrane protein</topology>
    </subcellularLocation>
</comment>
<comment type="subcellular location">
    <molecule>C30</molecule>
    <subcellularLocation>
        <location>Cytoplasm</location>
    </subcellularLocation>
    <text>C-terminally processed in the Golgi complex.</text>
</comment>
<comment type="domain">
    <text>The NPXY sequence motif found in many tyrosine-phosphorylated proteins is required for the specific binding of the PID domain. However, additional amino acids either N- or C-terminal to the NPXY motif are often required for complete interaction. The NPXY site is also involved in clathrin-mediated endocytosis.</text>
</comment>
<comment type="PTM">
    <text evidence="1">Proteolytically cleaved by caspases during neuronal apoptosis. Cleaved, in vitro, at Asp-624 by caspase-3 (By similarity).</text>
</comment>
<comment type="PTM">
    <text>N- and O-glycosylated.</text>
</comment>
<comment type="miscellaneous">
    <text>Binds zinc and copper in the extracellular domain. Zinc-binding increases heparin binding. No Cu(2+) reducing activity with copper-binding.</text>
</comment>
<comment type="similarity">
    <text evidence="5">Belongs to the APP family.</text>
</comment>